<comment type="function">
    <text evidence="1">Catalyzes the conversion of UDP-4-keto-arabinose (UDP-Ara4O) to UDP-4-amino-4-deoxy-L-arabinose (UDP-L-Ara4N). The modified arabinose is attached to lipid A and is required for resistance to polymyxin and cationic antimicrobial peptides.</text>
</comment>
<comment type="catalytic activity">
    <reaction evidence="1">
        <text>UDP-4-amino-4-deoxy-beta-L-arabinose + 2-oxoglutarate = UDP-beta-L-threo-pentopyranos-4-ulose + L-glutamate</text>
        <dbReference type="Rhea" id="RHEA:24710"/>
        <dbReference type="ChEBI" id="CHEBI:16810"/>
        <dbReference type="ChEBI" id="CHEBI:29985"/>
        <dbReference type="ChEBI" id="CHEBI:58708"/>
        <dbReference type="ChEBI" id="CHEBI:58710"/>
        <dbReference type="EC" id="2.6.1.87"/>
    </reaction>
</comment>
<comment type="cofactor">
    <cofactor evidence="1">
        <name>pyridoxal 5'-phosphate</name>
        <dbReference type="ChEBI" id="CHEBI:597326"/>
    </cofactor>
</comment>
<comment type="pathway">
    <text evidence="1">Nucleotide-sugar biosynthesis; UDP-4-deoxy-4-formamido-beta-L-arabinose biosynthesis; UDP-4-deoxy-4-formamido-beta-L-arabinose from UDP-alpha-D-glucuronate: step 2/3.</text>
</comment>
<comment type="pathway">
    <text evidence="1">Bacterial outer membrane biogenesis; lipopolysaccharide biosynthesis.</text>
</comment>
<comment type="subunit">
    <text evidence="1">Homodimer.</text>
</comment>
<comment type="similarity">
    <text evidence="1">Belongs to the DegT/DnrJ/EryC1 family. ArnB subfamily.</text>
</comment>
<dbReference type="EC" id="2.6.1.87" evidence="1"/>
<dbReference type="EMBL" id="AE017220">
    <property type="protein sequence ID" value="AAX66205.1"/>
    <property type="molecule type" value="Genomic_DNA"/>
</dbReference>
<dbReference type="SMR" id="Q57M57"/>
<dbReference type="KEGG" id="sec:SCH_2299"/>
<dbReference type="HOGENOM" id="CLU_033332_0_3_6"/>
<dbReference type="UniPathway" id="UPA00030"/>
<dbReference type="UniPathway" id="UPA00032">
    <property type="reaction ID" value="UER00493"/>
</dbReference>
<dbReference type="Proteomes" id="UP000000538">
    <property type="component" value="Chromosome"/>
</dbReference>
<dbReference type="GO" id="GO:0016020">
    <property type="term" value="C:membrane"/>
    <property type="evidence" value="ECO:0007669"/>
    <property type="project" value="GOC"/>
</dbReference>
<dbReference type="GO" id="GO:0030170">
    <property type="term" value="F:pyridoxal phosphate binding"/>
    <property type="evidence" value="ECO:0007669"/>
    <property type="project" value="TreeGrafter"/>
</dbReference>
<dbReference type="GO" id="GO:0099620">
    <property type="term" value="F:UDP-4-amino-4-deoxy-L-arabinose aminotransferase"/>
    <property type="evidence" value="ECO:0007669"/>
    <property type="project" value="UniProtKB-EC"/>
</dbReference>
<dbReference type="GO" id="GO:0009245">
    <property type="term" value="P:lipid A biosynthetic process"/>
    <property type="evidence" value="ECO:0007669"/>
    <property type="project" value="UniProtKB-KW"/>
</dbReference>
<dbReference type="GO" id="GO:0009103">
    <property type="term" value="P:lipopolysaccharide biosynthetic process"/>
    <property type="evidence" value="ECO:0007669"/>
    <property type="project" value="UniProtKB-UniRule"/>
</dbReference>
<dbReference type="GO" id="GO:0046677">
    <property type="term" value="P:response to antibiotic"/>
    <property type="evidence" value="ECO:0007669"/>
    <property type="project" value="UniProtKB-KW"/>
</dbReference>
<dbReference type="CDD" id="cd00616">
    <property type="entry name" value="AHBA_syn"/>
    <property type="match status" value="1"/>
</dbReference>
<dbReference type="FunFam" id="3.40.640.10:FF:000040">
    <property type="entry name" value="UDP-4-amino-4-deoxy-L-arabinose--oxoglutarate aminotransferase"/>
    <property type="match status" value="1"/>
</dbReference>
<dbReference type="FunFam" id="3.90.1150.10:FF:000030">
    <property type="entry name" value="UDP-4-amino-4-deoxy-L-arabinose--oxoglutarate aminotransferase"/>
    <property type="match status" value="1"/>
</dbReference>
<dbReference type="Gene3D" id="3.90.1150.10">
    <property type="entry name" value="Aspartate Aminotransferase, domain 1"/>
    <property type="match status" value="1"/>
</dbReference>
<dbReference type="Gene3D" id="3.40.640.10">
    <property type="entry name" value="Type I PLP-dependent aspartate aminotransferase-like (Major domain)"/>
    <property type="match status" value="1"/>
</dbReference>
<dbReference type="HAMAP" id="MF_01167">
    <property type="entry name" value="ArnB_transfer"/>
    <property type="match status" value="1"/>
</dbReference>
<dbReference type="InterPro" id="IPR022850">
    <property type="entry name" value="ArnB_NH2Trfase"/>
</dbReference>
<dbReference type="InterPro" id="IPR000653">
    <property type="entry name" value="DegT/StrS_aminotransferase"/>
</dbReference>
<dbReference type="InterPro" id="IPR015424">
    <property type="entry name" value="PyrdxlP-dep_Trfase"/>
</dbReference>
<dbReference type="InterPro" id="IPR015421">
    <property type="entry name" value="PyrdxlP-dep_Trfase_major"/>
</dbReference>
<dbReference type="InterPro" id="IPR015422">
    <property type="entry name" value="PyrdxlP-dep_Trfase_small"/>
</dbReference>
<dbReference type="NCBIfam" id="NF008658">
    <property type="entry name" value="PRK11658.1"/>
    <property type="match status" value="1"/>
</dbReference>
<dbReference type="PANTHER" id="PTHR30244">
    <property type="entry name" value="TRANSAMINASE"/>
    <property type="match status" value="1"/>
</dbReference>
<dbReference type="PANTHER" id="PTHR30244:SF41">
    <property type="entry name" value="UDP-4-AMINO-4-DEOXY-L-ARABINOSE--OXOGLUTARATE AMINOTRANSFERASE"/>
    <property type="match status" value="1"/>
</dbReference>
<dbReference type="Pfam" id="PF01041">
    <property type="entry name" value="DegT_DnrJ_EryC1"/>
    <property type="match status" value="1"/>
</dbReference>
<dbReference type="PIRSF" id="PIRSF000390">
    <property type="entry name" value="PLP_StrS"/>
    <property type="match status" value="1"/>
</dbReference>
<dbReference type="SUPFAM" id="SSF53383">
    <property type="entry name" value="PLP-dependent transferases"/>
    <property type="match status" value="1"/>
</dbReference>
<reference key="1">
    <citation type="journal article" date="2005" name="Nucleic Acids Res.">
        <title>The genome sequence of Salmonella enterica serovar Choleraesuis, a highly invasive and resistant zoonotic pathogen.</title>
        <authorList>
            <person name="Chiu C.-H."/>
            <person name="Tang P."/>
            <person name="Chu C."/>
            <person name="Hu S."/>
            <person name="Bao Q."/>
            <person name="Yu J."/>
            <person name="Chou Y.-Y."/>
            <person name="Wang H.-S."/>
            <person name="Lee Y.-S."/>
        </authorList>
    </citation>
    <scope>NUCLEOTIDE SEQUENCE [LARGE SCALE GENOMIC DNA]</scope>
    <source>
        <strain>SC-B67</strain>
    </source>
</reference>
<sequence>MSDFLPFSRPAMGAEELAAVKTVLDSGWITTGPKNQELEAAFCRLTGNQYAVAVSSATAGMHIALMALGIGEGDEVITPSMTWVSTLNMIVLLGANPVMVDVDRDTLMVTPEHIEAAITPQTKAIIPVHYAGAPADLDAIYALGERYGIPVIEDAAHATGTSYKGLHIGARGTAIFSFHAIKNITCAEGGIVVTDNPQFADKLRSLKFHGLGVDAWDRQSGGRAPQAEVLAPGYKYNLPDLNAAIALAQLQKLDALNARRAAIAAQYHQAMADLPFQPLSLPSWEHIHAWHLFIIRVDEARCGITRDALMASLKTKGIGTGLHFRAAHTQKYYRERFPTLTLPDTEWNSERICSLPLFPDMTESDFDRVITALHQIAGQ</sequence>
<feature type="chain" id="PRO_0000110025" description="UDP-4-amino-4-deoxy-L-arabinose--oxoglutarate aminotransferase">
    <location>
        <begin position="1"/>
        <end position="379"/>
    </location>
</feature>
<feature type="modified residue" description="N6-(pyridoxal phosphate)lysine" evidence="1">
    <location>
        <position position="182"/>
    </location>
</feature>
<protein>
    <recommendedName>
        <fullName evidence="1">UDP-4-amino-4-deoxy-L-arabinose--oxoglutarate aminotransferase</fullName>
        <ecNumber evidence="1">2.6.1.87</ecNumber>
    </recommendedName>
    <alternativeName>
        <fullName evidence="1">UDP-(beta-L-threo-pentapyranosyl-4''-ulose diphosphate) aminotransferase</fullName>
        <shortName evidence="1">UDP-Ara4O aminotransferase</shortName>
    </alternativeName>
    <alternativeName>
        <fullName evidence="1">UDP-4-amino-4-deoxy-L-arabinose aminotransferase</fullName>
    </alternativeName>
</protein>
<keyword id="KW-0032">Aminotransferase</keyword>
<keyword id="KW-0046">Antibiotic resistance</keyword>
<keyword id="KW-0441">Lipid A biosynthesis</keyword>
<keyword id="KW-0444">Lipid biosynthesis</keyword>
<keyword id="KW-0443">Lipid metabolism</keyword>
<keyword id="KW-0448">Lipopolysaccharide biosynthesis</keyword>
<keyword id="KW-0663">Pyridoxal phosphate</keyword>
<keyword id="KW-0808">Transferase</keyword>
<evidence type="ECO:0000255" key="1">
    <source>
        <dbReference type="HAMAP-Rule" id="MF_01167"/>
    </source>
</evidence>
<name>ARNB_SALCH</name>
<organism>
    <name type="scientific">Salmonella choleraesuis (strain SC-B67)</name>
    <dbReference type="NCBI Taxonomy" id="321314"/>
    <lineage>
        <taxon>Bacteria</taxon>
        <taxon>Pseudomonadati</taxon>
        <taxon>Pseudomonadota</taxon>
        <taxon>Gammaproteobacteria</taxon>
        <taxon>Enterobacterales</taxon>
        <taxon>Enterobacteriaceae</taxon>
        <taxon>Salmonella</taxon>
    </lineage>
</organism>
<proteinExistence type="inferred from homology"/>
<accession>Q57M57</accession>
<gene>
    <name evidence="1" type="primary">arnB</name>
    <name type="ordered locus">SCH_2299</name>
</gene>